<comment type="function">
    <text evidence="1">Catalyzes the radical S-adenosyl-L-methionine (SAM)-dependent two-electron oxidation of 2-deoxy-scyllo-inosamine (DOIA) to amino-dideoxy-scyllo-inosose (amino-DOI) in the biosynthetic pathway of butirosin.</text>
</comment>
<comment type="catalytic activity">
    <reaction evidence="1 2">
        <text>2-deoxy-scyllo-inosamine + S-adenosyl-L-methionine = 3-amino-2,3-dideoxy-scyllo-inosose + 5'-deoxyadenosine + L-methionine + H(+)</text>
        <dbReference type="Rhea" id="RHEA:34275"/>
        <dbReference type="ChEBI" id="CHEBI:15378"/>
        <dbReference type="ChEBI" id="CHEBI:17319"/>
        <dbReference type="ChEBI" id="CHEBI:57844"/>
        <dbReference type="ChEBI" id="CHEBI:59789"/>
        <dbReference type="ChEBI" id="CHEBI:65002"/>
        <dbReference type="ChEBI" id="CHEBI:65003"/>
        <dbReference type="EC" id="1.1.99.38"/>
    </reaction>
</comment>
<comment type="cofactor">
    <cofactor evidence="5 6">
        <name>[4Fe-4S] cluster</name>
        <dbReference type="ChEBI" id="CHEBI:49883"/>
    </cofactor>
    <text evidence="5 6">Binds 2 [4Fe-4S] clusters. One cluster is coordinated with 3 cysteines and an exchangeable S-adenosyl-L-methionine. A second auxiliary cluster is also in contact with the substrate and is proposed to facilitate the loss of the second electron in the oxidation.</text>
</comment>
<comment type="biophysicochemical properties">
    <kinetics>
        <KM evidence="1">0.022 mM for DOIA</KM>
        <text>Kinetic parameter was determined with saturating SAM. DOIA displays substrate inhibition.</text>
    </kinetics>
</comment>
<comment type="pathway">
    <text evidence="1">Antibiotic biosynthesis; butirosin biosynthesis.</text>
</comment>
<comment type="similarity">
    <text evidence="4">Belongs to the radical SAM superfamily.</text>
</comment>
<protein>
    <recommendedName>
        <fullName>S-adenosyl-L-methionine-dependent 2-deoxy-scyllo-inosamine dehydrogenase</fullName>
        <ecNumber>1.1.99.38</ecNumber>
    </recommendedName>
    <alternativeName>
        <fullName>Butirosin biosynthesis protein N</fullName>
    </alternativeName>
    <alternativeName>
        <fullName>Radical S-adenosylmethionine dehydrogenase BtrN</fullName>
        <shortName>RS dehydrogenase BtrN</shortName>
        <shortName>Radical SAM dehydrogenase BtrN</shortName>
    </alternativeName>
</protein>
<organism>
    <name type="scientific">Niallia circulans</name>
    <name type="common">Bacillus circulans</name>
    <dbReference type="NCBI Taxonomy" id="1397"/>
    <lineage>
        <taxon>Bacteria</taxon>
        <taxon>Bacillati</taxon>
        <taxon>Bacillota</taxon>
        <taxon>Bacilli</taxon>
        <taxon>Bacillales</taxon>
        <taxon>Bacillaceae</taxon>
        <taxon>Niallia</taxon>
    </lineage>
</organism>
<dbReference type="EC" id="1.1.99.38"/>
<dbReference type="EMBL" id="AB097196">
    <property type="protein sequence ID" value="BAE07062.1"/>
    <property type="molecule type" value="Genomic_DNA"/>
</dbReference>
<dbReference type="EMBL" id="AJ494863">
    <property type="protein sequence ID" value="CAD41948.1"/>
    <property type="molecule type" value="Genomic_DNA"/>
</dbReference>
<dbReference type="PDB" id="4M7S">
    <property type="method" value="X-ray"/>
    <property type="resolution" value="2.02 A"/>
    <property type="chains" value="A=1-250"/>
</dbReference>
<dbReference type="PDB" id="4M7T">
    <property type="method" value="X-ray"/>
    <property type="resolution" value="1.56 A"/>
    <property type="chains" value="A=1-250"/>
</dbReference>
<dbReference type="PDBsum" id="4M7S"/>
<dbReference type="PDBsum" id="4M7T"/>
<dbReference type="SMR" id="Q8G907"/>
<dbReference type="KEGG" id="ag:BAE07062"/>
<dbReference type="BioCyc" id="MetaCyc:MONOMER-17280"/>
<dbReference type="BRENDA" id="1.1.99.38">
    <property type="organism ID" value="649"/>
</dbReference>
<dbReference type="UniPathway" id="UPA00964"/>
<dbReference type="EvolutionaryTrace" id="Q8G907"/>
<dbReference type="GO" id="GO:0051539">
    <property type="term" value="F:4 iron, 4 sulfur cluster binding"/>
    <property type="evidence" value="ECO:0007669"/>
    <property type="project" value="UniProtKB-KW"/>
</dbReference>
<dbReference type="GO" id="GO:0046872">
    <property type="term" value="F:metal ion binding"/>
    <property type="evidence" value="ECO:0007669"/>
    <property type="project" value="UniProtKB-KW"/>
</dbReference>
<dbReference type="GO" id="GO:0016491">
    <property type="term" value="F:oxidoreductase activity"/>
    <property type="evidence" value="ECO:0007669"/>
    <property type="project" value="UniProtKB-KW"/>
</dbReference>
<dbReference type="GO" id="GO:0017000">
    <property type="term" value="P:antibiotic biosynthetic process"/>
    <property type="evidence" value="ECO:0007669"/>
    <property type="project" value="UniProtKB-KW"/>
</dbReference>
<dbReference type="CDD" id="cd01335">
    <property type="entry name" value="Radical_SAM"/>
    <property type="match status" value="1"/>
</dbReference>
<dbReference type="CDD" id="cd21129">
    <property type="entry name" value="SPASM_BtrN"/>
    <property type="match status" value="1"/>
</dbReference>
<dbReference type="Gene3D" id="3.20.20.70">
    <property type="entry name" value="Aldolase class I"/>
    <property type="match status" value="1"/>
</dbReference>
<dbReference type="InterPro" id="IPR023885">
    <property type="entry name" value="4Fe4S-binding_SPASM_dom"/>
</dbReference>
<dbReference type="InterPro" id="IPR013785">
    <property type="entry name" value="Aldolase_TIM"/>
</dbReference>
<dbReference type="InterPro" id="IPR034386">
    <property type="entry name" value="BtrN-like"/>
</dbReference>
<dbReference type="InterPro" id="IPR007197">
    <property type="entry name" value="rSAM"/>
</dbReference>
<dbReference type="NCBIfam" id="TIGR04085">
    <property type="entry name" value="rSAM_more_4Fe4S"/>
    <property type="match status" value="1"/>
</dbReference>
<dbReference type="PANTHER" id="PTHR43787:SF10">
    <property type="entry name" value="COFACTOR MODIFYING PROTEIN"/>
    <property type="match status" value="1"/>
</dbReference>
<dbReference type="PANTHER" id="PTHR43787">
    <property type="entry name" value="FEMO COFACTOR BIOSYNTHESIS PROTEIN NIFB-RELATED"/>
    <property type="match status" value="1"/>
</dbReference>
<dbReference type="Pfam" id="PF04055">
    <property type="entry name" value="Radical_SAM"/>
    <property type="match status" value="1"/>
</dbReference>
<dbReference type="Pfam" id="PF13186">
    <property type="entry name" value="SPASM"/>
    <property type="match status" value="1"/>
</dbReference>
<dbReference type="SFLD" id="SFLDF00424">
    <property type="entry name" value="2-deoxy-scyllo-inosamine_dehyd"/>
    <property type="match status" value="1"/>
</dbReference>
<dbReference type="SFLD" id="SFLDS00029">
    <property type="entry name" value="Radical_SAM"/>
    <property type="match status" value="1"/>
</dbReference>
<dbReference type="SUPFAM" id="SSF102114">
    <property type="entry name" value="Radical SAM enzymes"/>
    <property type="match status" value="1"/>
</dbReference>
<gene>
    <name type="primary">btrN</name>
</gene>
<sequence>MDKLFSMIEVEVNSQCNRTCWYCPNSVSKRKETGEMDPALYKTLMEQLSSLDFAGRISFHFYGEPLLCKNLDLFVGMTTEYIPRARPIIYTNGDFLTEKRLQTLTELGIQKFIVTQHAGAKHKFRGVYDQLAGADKEKVVYLDHSDLVLSNRGGILDNIPQASKANMSCMVPSNLAVVTVLGNVLPCFEDFNQKMVMGNIGEQHISDIWHNDKFTSFRKMLKEGHRGKSDLCKNCNNVSVQTEEQYDYVL</sequence>
<feature type="chain" id="PRO_0000424206" description="S-adenosyl-L-methionine-dependent 2-deoxy-scyllo-inosamine dehydrogenase">
    <location>
        <begin position="1"/>
        <end position="250"/>
    </location>
</feature>
<feature type="binding site" evidence="4">
    <location>
        <position position="16"/>
    </location>
    <ligand>
        <name>[4Fe-4S] cluster</name>
        <dbReference type="ChEBI" id="CHEBI:49883"/>
        <label>1</label>
        <note>4Fe-4S-S-AdoMet</note>
    </ligand>
</feature>
<feature type="binding site" evidence="4">
    <location>
        <position position="20"/>
    </location>
    <ligand>
        <name>[4Fe-4S] cluster</name>
        <dbReference type="ChEBI" id="CHEBI:49883"/>
        <label>1</label>
        <note>4Fe-4S-S-AdoMet</note>
    </ligand>
</feature>
<feature type="binding site" evidence="4">
    <location>
        <position position="23"/>
    </location>
    <ligand>
        <name>[4Fe-4S] cluster</name>
        <dbReference type="ChEBI" id="CHEBI:49883"/>
        <label>1</label>
        <note>4Fe-4S-S-AdoMet</note>
    </ligand>
</feature>
<feature type="binding site" evidence="4">
    <location>
        <position position="169"/>
    </location>
    <ligand>
        <name>[4Fe-4S] cluster</name>
        <dbReference type="ChEBI" id="CHEBI:49883"/>
        <label>2</label>
        <note>4Fe-4S-substrate</note>
    </ligand>
</feature>
<feature type="binding site" evidence="4">
    <location>
        <position position="187"/>
    </location>
    <ligand>
        <name>[4Fe-4S] cluster</name>
        <dbReference type="ChEBI" id="CHEBI:49883"/>
        <label>2</label>
        <note>4Fe-4S-substrate</note>
    </ligand>
</feature>
<feature type="binding site" evidence="4">
    <location>
        <position position="223"/>
    </location>
    <ligand>
        <name>[4Fe-4S] cluster</name>
        <dbReference type="ChEBI" id="CHEBI:49883"/>
        <label>2</label>
        <note>4Fe-4S-substrate</note>
    </ligand>
</feature>
<feature type="mutagenesis site" description="Reduced iron-sulfur content by 50%; when associated with A-20 and A-23." evidence="3">
    <original>C</original>
    <variation>A</variation>
    <location>
        <position position="16"/>
    </location>
</feature>
<feature type="mutagenesis site" description="Reduced iron-sulfur content by 50%; when associated with A-16 and A-23." evidence="3">
    <original>C</original>
    <variation>A</variation>
    <location>
        <position position="20"/>
    </location>
</feature>
<feature type="mutagenesis site" description="Reduced iron-sulfur content by 50%; when associated with A-16 and A-20." evidence="3">
    <original>C</original>
    <variation>A</variation>
    <location>
        <position position="23"/>
    </location>
</feature>
<feature type="mutagenesis site" description="Soluble protein." evidence="3">
    <original>C</original>
    <variation>A</variation>
    <location>
        <position position="68"/>
    </location>
</feature>
<feature type="mutagenesis site" description="Insoluble protein." evidence="3">
    <original>C</original>
    <variation>A</variation>
    <location>
        <position position="169"/>
    </location>
</feature>
<feature type="mutagenesis site" description="Insoluble protein." evidence="3">
    <original>C</original>
    <variation>A</variation>
    <location>
        <position position="187"/>
    </location>
</feature>
<feature type="mutagenesis site" description="Insoluble protein." evidence="3">
    <original>C</original>
    <variation>A</variation>
    <location>
        <position position="232"/>
    </location>
</feature>
<feature type="mutagenesis site" description="Soluble protein; reduces activity." evidence="3">
    <original>C</original>
    <variation>A</variation>
    <location>
        <position position="235"/>
    </location>
</feature>
<feature type="strand" evidence="8">
    <location>
        <begin position="6"/>
        <end position="10"/>
    </location>
</feature>
<feature type="helix" evidence="8">
    <location>
        <begin position="24"/>
        <end position="26"/>
    </location>
</feature>
<feature type="helix" evidence="8">
    <location>
        <begin position="38"/>
        <end position="50"/>
    </location>
</feature>
<feature type="strand" evidence="8">
    <location>
        <begin position="55"/>
        <end position="58"/>
    </location>
</feature>
<feature type="strand" evidence="8">
    <location>
        <begin position="61"/>
        <end position="63"/>
    </location>
</feature>
<feature type="helix" evidence="8">
    <location>
        <begin position="65"/>
        <end position="67"/>
    </location>
</feature>
<feature type="helix" evidence="8">
    <location>
        <begin position="71"/>
        <end position="81"/>
    </location>
</feature>
<feature type="strand" evidence="8">
    <location>
        <begin position="85"/>
        <end position="91"/>
    </location>
</feature>
<feature type="helix" evidence="8">
    <location>
        <begin position="98"/>
        <end position="107"/>
    </location>
</feature>
<feature type="strand" evidence="8">
    <location>
        <begin position="111"/>
        <end position="116"/>
    </location>
</feature>
<feature type="strand" evidence="8">
    <location>
        <begin position="118"/>
        <end position="120"/>
    </location>
</feature>
<feature type="helix" evidence="8">
    <location>
        <begin position="124"/>
        <end position="130"/>
    </location>
</feature>
<feature type="helix" evidence="8">
    <location>
        <begin position="133"/>
        <end position="136"/>
    </location>
</feature>
<feature type="strand" evidence="8">
    <location>
        <begin position="139"/>
        <end position="143"/>
    </location>
</feature>
<feature type="helix" evidence="8">
    <location>
        <begin position="144"/>
        <end position="146"/>
    </location>
</feature>
<feature type="turn" evidence="8">
    <location>
        <begin position="152"/>
        <end position="155"/>
    </location>
</feature>
<feature type="helix" evidence="7">
    <location>
        <begin position="163"/>
        <end position="166"/>
    </location>
</feature>
<feature type="helix" evidence="8">
    <location>
        <begin position="171"/>
        <end position="174"/>
    </location>
</feature>
<feature type="strand" evidence="8">
    <location>
        <begin position="175"/>
        <end position="178"/>
    </location>
</feature>
<feature type="strand" evidence="8">
    <location>
        <begin position="182"/>
        <end position="186"/>
    </location>
</feature>
<feature type="turn" evidence="8">
    <location>
        <begin position="200"/>
        <end position="202"/>
    </location>
</feature>
<feature type="helix" evidence="8">
    <location>
        <begin position="205"/>
        <end position="209"/>
    </location>
</feature>
<feature type="helix" evidence="8">
    <location>
        <begin position="212"/>
        <end position="222"/>
    </location>
</feature>
<feature type="helix" evidence="8">
    <location>
        <begin position="226"/>
        <end position="228"/>
    </location>
</feature>
<feature type="turn" evidence="8">
    <location>
        <begin position="230"/>
        <end position="234"/>
    </location>
</feature>
<feature type="strand" evidence="7">
    <location>
        <begin position="239"/>
        <end position="241"/>
    </location>
</feature>
<feature type="helix" evidence="7">
    <location>
        <begin position="243"/>
        <end position="246"/>
    </location>
</feature>
<accession>Q8G907</accession>
<evidence type="ECO:0000269" key="1">
    <source>
    </source>
</evidence>
<evidence type="ECO:0000269" key="2">
    <source>
    </source>
</evidence>
<evidence type="ECO:0000269" key="3">
    <source>
    </source>
</evidence>
<evidence type="ECO:0000305" key="4"/>
<evidence type="ECO:0000305" key="5">
    <source>
    </source>
</evidence>
<evidence type="ECO:0000305" key="6">
    <source>
    </source>
</evidence>
<evidence type="ECO:0007829" key="7">
    <source>
        <dbReference type="PDB" id="4M7S"/>
    </source>
</evidence>
<evidence type="ECO:0007829" key="8">
    <source>
        <dbReference type="PDB" id="4M7T"/>
    </source>
</evidence>
<name>BTRN_NIACI</name>
<proteinExistence type="evidence at protein level"/>
<reference key="1">
    <citation type="journal article" date="2000" name="J. Antibiot.">
        <title>Butirosin-biosynthetic gene cluster from Bacillus circulans.</title>
        <authorList>
            <person name="Ota Y."/>
            <person name="Tamegai H."/>
            <person name="Kudo F."/>
            <person name="Kuriki H."/>
            <person name="Koike-Takeshita A."/>
            <person name="Eguchi T."/>
            <person name="Kakinuma K."/>
        </authorList>
    </citation>
    <scope>NUCLEOTIDE SEQUENCE [GENOMIC DNA]</scope>
</reference>
<reference key="2">
    <citation type="submission" date="2002-07" db="EMBL/GenBank/DDBJ databases">
        <authorList>
            <person name="Huang F."/>
        </authorList>
    </citation>
    <scope>NUCLEOTIDE SEQUENCE [GENOMIC DNA]</scope>
</reference>
<reference key="3">
    <citation type="journal article" date="2007" name="J. Am. Chem. Soc.">
        <title>Characterization and mechanistic study of a radical SAM dehydrogenase in the biosynthesis of butirosin.</title>
        <authorList>
            <person name="Yokoyama K."/>
            <person name="Numakura M."/>
            <person name="Kudo F."/>
            <person name="Ohmori D."/>
            <person name="Eguchi T."/>
        </authorList>
    </citation>
    <scope>FUNCTION</scope>
    <scope>CATALYTIC ACTIVITY</scope>
    <scope>BIOPHYSICOCHEMICAL PROPERTIES</scope>
    <scope>PATHWAY</scope>
</reference>
<reference key="4">
    <citation type="journal article" date="2008" name="Biochemistry">
        <title>Mechanistic study on the reaction of a radical SAM dehydrogenase BtrN by electron paramagnetic resonance spectroscopy.</title>
        <authorList>
            <person name="Yokoyama K."/>
            <person name="Ohmori D."/>
            <person name="Kudo F."/>
            <person name="Eguchi T."/>
        </authorList>
    </citation>
    <scope>CATALYTIC ACTIVITY</scope>
    <scope>COFACTOR</scope>
</reference>
<reference key="5">
    <citation type="journal article" date="2010" name="Biochemistry">
        <title>A consensus mechanism for Radical SAM-dependent dehydrogenation? BtrN contains two [4Fe-4S] clusters.</title>
        <authorList>
            <person name="Grove T.L."/>
            <person name="Ahlum J.H."/>
            <person name="Sharma P."/>
            <person name="Krebs C."/>
            <person name="Booker S.J."/>
        </authorList>
    </citation>
    <scope>COFACTOR</scope>
    <scope>MUTAGENESIS OF CYS-16; CYS-20; CYS-23; CYS-68; CYS-169; CYS-187; CYS-232 AND CYS-235</scope>
</reference>
<keyword id="KW-0002">3D-structure</keyword>
<keyword id="KW-0004">4Fe-4S</keyword>
<keyword id="KW-0045">Antibiotic biosynthesis</keyword>
<keyword id="KW-0408">Iron</keyword>
<keyword id="KW-0411">Iron-sulfur</keyword>
<keyword id="KW-0479">Metal-binding</keyword>
<keyword id="KW-0560">Oxidoreductase</keyword>
<keyword id="KW-0949">S-adenosyl-L-methionine</keyword>